<evidence type="ECO:0000255" key="1">
    <source>
        <dbReference type="PROSITE-ProRule" id="PRU00691"/>
    </source>
</evidence>
<evidence type="ECO:0000269" key="2">
    <source>
    </source>
</evidence>
<evidence type="ECO:0000269" key="3">
    <source>
    </source>
</evidence>
<evidence type="ECO:0000269" key="4">
    <source>
    </source>
</evidence>
<evidence type="ECO:0000269" key="5">
    <source>
    </source>
</evidence>
<evidence type="ECO:0000305" key="6"/>
<evidence type="ECO:0007829" key="7">
    <source>
        <dbReference type="PDB" id="4HUA"/>
    </source>
</evidence>
<protein>
    <recommendedName>
        <fullName>Thioredoxin 1</fullName>
        <shortName>Trx-1</shortName>
    </recommendedName>
</protein>
<gene>
    <name type="primary">trxA</name>
    <name type="synonym">fipA</name>
    <name type="synonym">tsnC</name>
    <name type="ordered locus">b3781</name>
    <name type="ordered locus">JW5856</name>
</gene>
<comment type="function">
    <text>Participates in various redox reactions through the reversible oxidation of its active center dithiol to a disulfide and catalyzes dithiol-disulfide exchange reactions.</text>
</comment>
<comment type="subunit">
    <text evidence="3">Monomer. Interacts with bacteriophage T3 DNA polymerase.</text>
</comment>
<comment type="interaction">
    <interactant intactId="EBI-368542">
        <id>P0AA25</id>
    </interactant>
    <interactant intactId="EBI-1029826">
        <id>P0A9P4</id>
        <label>trxB</label>
    </interactant>
    <organismsDiffer>false</organismsDiffer>
    <experiments>2</experiments>
</comment>
<comment type="interaction">
    <interactant intactId="EBI-368542">
        <id>P0AA25</id>
    </interactant>
    <interactant intactId="EBI-8664634">
        <id>P00581</id>
        <label>5</label>
    </interactant>
    <organismsDiffer>true</organismsDiffer>
    <experiments>2</experiments>
</comment>
<comment type="interaction">
    <interactant intactId="EBI-368542">
        <id>P0AA25</id>
    </interactant>
    <interactant intactId="EBI-2895776">
        <id>O22160</id>
        <label>At2g44920</label>
    </interactant>
    <organismsDiffer>true</organismsDiffer>
    <experiments>2</experiments>
</comment>
<comment type="interaction">
    <interactant intactId="EBI-368542">
        <id>P0AA25</id>
    </interactant>
    <interactant intactId="EBI-2895757">
        <id>Q9SCY2</id>
        <label>FKBP13</label>
    </interactant>
    <organismsDiffer>true</organismsDiffer>
    <experiments>2</experiments>
</comment>
<comment type="interaction">
    <interactant intactId="EBI-368542">
        <id>P0AA25</id>
    </interactant>
    <interactant intactId="EBI-2895738">
        <id>Q9LXX5</id>
        <label>PPD6</label>
    </interactant>
    <organismsDiffer>true</organismsDiffer>
    <experiments>2</experiments>
</comment>
<comment type="interaction">
    <interactant intactId="EBI-368542">
        <id>P0AA25</id>
    </interactant>
    <interactant intactId="EBI-540311">
        <id>Q9LU86</id>
        <label>PRXQ</label>
    </interactant>
    <organismsDiffer>true</organismsDiffer>
    <experiments>2</experiments>
</comment>
<comment type="interaction">
    <interactant intactId="EBI-368542">
        <id>P0AA25</id>
    </interactant>
    <interactant intactId="EBI-449414">
        <id>P23321</id>
        <label>PSBO1</label>
    </interactant>
    <organismsDiffer>true</organismsDiffer>
    <experiments>2</experiments>
</comment>
<comment type="interaction">
    <interactant intactId="EBI-368542">
        <id>P0AA25</id>
    </interactant>
    <interactant intactId="EBI-449424">
        <id>Q9S841</id>
        <label>PSBO2</label>
    </interactant>
    <organismsDiffer>true</organismsDiffer>
    <experiments>2</experiments>
</comment>
<comment type="interaction">
    <interactant intactId="EBI-368542">
        <id>P0AA25</id>
    </interactant>
    <interactant intactId="EBI-449573">
        <id>P81760</id>
        <label>TL17</label>
    </interactant>
    <organismsDiffer>true</organismsDiffer>
    <experiments>2</experiments>
</comment>
<comment type="interaction">
    <interactant intactId="EBI-368542">
        <id>P0AA25</id>
    </interactant>
    <interactant intactId="EBI-2895799">
        <id>P82281</id>
        <label>TL29</label>
    </interactant>
    <organismsDiffer>true</organismsDiffer>
    <experiments>2</experiments>
</comment>
<comment type="interaction">
    <interactant intactId="EBI-368542">
        <id>P0AA25</id>
    </interactant>
    <interactant intactId="EBI-2895666">
        <id>Q39249</id>
        <label>VDE1</label>
    </interactant>
    <organismsDiffer>true</organismsDiffer>
    <experiments>2</experiments>
</comment>
<comment type="similarity">
    <text evidence="6">Belongs to the thioredoxin family.</text>
</comment>
<comment type="sequence caution" evidence="6">
    <conflict type="erroneous initiation">
        <sequence resource="EMBL-CDS" id="AAA24534"/>
    </conflict>
    <text>Extended N-terminus.</text>
</comment>
<comment type="sequence caution" evidence="6">
    <conflict type="erroneous initiation">
        <sequence resource="EMBL-CDS" id="AAA67582"/>
    </conflict>
    <text>Extended N-terminus.</text>
</comment>
<proteinExistence type="evidence at protein level"/>
<reference key="1">
    <citation type="journal article" date="1984" name="Biosci. Rep.">
        <title>Nucleotide sequence of the thioredoxin gene from Escherichia coli.</title>
        <authorList>
            <person name="Hoeoeg J.-O."/>
            <person name="von Bahr-Lindstroem H."/>
            <person name="Josephson S."/>
            <person name="Wallace B.J."/>
            <person name="Kushner S.R."/>
            <person name="Joernvall H."/>
            <person name="Holmgren A."/>
        </authorList>
    </citation>
    <scope>NUCLEOTIDE SEQUENCE [GENOMIC DNA]</scope>
</reference>
<reference key="2">
    <citation type="journal article" date="1984" name="Gene">
        <title>Genetic and physical analysis of the thioredoxin (trxA) gene of Escherichia coli K-12.</title>
        <authorList>
            <person name="Wallace B.J."/>
            <person name="Kushner S.R."/>
        </authorList>
    </citation>
    <scope>NUCLEOTIDE SEQUENCE [GENOMIC DNA]</scope>
</reference>
<reference key="3">
    <citation type="journal article" date="1985" name="J. Bacteriol.">
        <title>Cloning and nucleotide sequence of the trxA gene of Escherichia coli K-12.</title>
        <authorList>
            <person name="Lim C.-J."/>
            <person name="Geraghty D."/>
            <person name="Fuchs J.A."/>
        </authorList>
    </citation>
    <scope>NUCLEOTIDE SEQUENCE [GENOMIC DNA]</scope>
</reference>
<reference key="4">
    <citation type="book" date="1986" name="Thioredoxin and glutaredoxin systems, structure and function">
        <title>Physical analysis of the thioredoxin gene from Escherichia coli K-12.</title>
        <editorList>
            <person name="Holmgren A."/>
        </editorList>
        <authorList>
            <person name="Wallace B.J."/>
            <person name="Zownir O."/>
            <person name="Kushner S.R."/>
        </authorList>
    </citation>
    <scope>NUCLEOTIDE SEQUENCE [GENOMIC DNA]</scope>
</reference>
<reference key="5">
    <citation type="journal article" date="1992" name="Science">
        <title>Analysis of the Escherichia coli genome: DNA sequence of the region from 84.5 to 86.5 minutes.</title>
        <authorList>
            <person name="Daniels D.L."/>
            <person name="Plunkett G. III"/>
            <person name="Burland V.D."/>
            <person name="Blattner F.R."/>
        </authorList>
    </citation>
    <scope>NUCLEOTIDE SEQUENCE [LARGE SCALE GENOMIC DNA]</scope>
    <source>
        <strain>K12 / MG1655 / ATCC 47076</strain>
    </source>
</reference>
<reference key="6">
    <citation type="journal article" date="1997" name="Science">
        <title>The complete genome sequence of Escherichia coli K-12.</title>
        <authorList>
            <person name="Blattner F.R."/>
            <person name="Plunkett G. III"/>
            <person name="Bloch C.A."/>
            <person name="Perna N.T."/>
            <person name="Burland V."/>
            <person name="Riley M."/>
            <person name="Collado-Vides J."/>
            <person name="Glasner J.D."/>
            <person name="Rode C.K."/>
            <person name="Mayhew G.F."/>
            <person name="Gregor J."/>
            <person name="Davis N.W."/>
            <person name="Kirkpatrick H.A."/>
            <person name="Goeden M.A."/>
            <person name="Rose D.J."/>
            <person name="Mau B."/>
            <person name="Shao Y."/>
        </authorList>
    </citation>
    <scope>NUCLEOTIDE SEQUENCE [LARGE SCALE GENOMIC DNA]</scope>
    <source>
        <strain>K12 / MG1655 / ATCC 47076</strain>
    </source>
</reference>
<reference key="7">
    <citation type="journal article" date="2006" name="Mol. Syst. Biol.">
        <title>Highly accurate genome sequences of Escherichia coli K-12 strains MG1655 and W3110.</title>
        <authorList>
            <person name="Hayashi K."/>
            <person name="Morooka N."/>
            <person name="Yamamoto Y."/>
            <person name="Fujita K."/>
            <person name="Isono K."/>
            <person name="Choi S."/>
            <person name="Ohtsubo E."/>
            <person name="Baba T."/>
            <person name="Wanner B.L."/>
            <person name="Mori H."/>
            <person name="Horiuchi T."/>
        </authorList>
    </citation>
    <scope>NUCLEOTIDE SEQUENCE [LARGE SCALE GENOMIC DNA]</scope>
    <source>
        <strain>K12 / W3110 / ATCC 27325 / DSM 5911</strain>
    </source>
</reference>
<reference key="8">
    <citation type="journal article" date="1968" name="Eur. J. Biochem.">
        <title>Thioredoxin. 6. The amino acid sequence of the protein from Escherichia coli B.</title>
        <authorList>
            <person name="Holmgren A."/>
        </authorList>
    </citation>
    <scope>PROTEIN SEQUENCE OF 2-109</scope>
    <source>
        <strain>B</strain>
    </source>
</reference>
<reference key="9">
    <citation type="journal article" date="1997" name="Electrophoresis">
        <title>Escherichia coli proteome analysis using the gene-protein database.</title>
        <authorList>
            <person name="VanBogelen R.A."/>
            <person name="Abshire K.Z."/>
            <person name="Moldover B."/>
            <person name="Olson E.R."/>
            <person name="Neidhardt F.C."/>
        </authorList>
    </citation>
    <scope>IDENTIFICATION BY 2D-GEL</scope>
</reference>
<reference key="10">
    <citation type="journal article" date="2009" name="Mol. Cell. Proteomics">
        <title>Lysine acetylation is a highly abundant and evolutionarily conserved modification in Escherichia coli.</title>
        <authorList>
            <person name="Zhang J."/>
            <person name="Sprung R."/>
            <person name="Pei J."/>
            <person name="Tan X."/>
            <person name="Kim S."/>
            <person name="Zhu H."/>
            <person name="Liu C.F."/>
            <person name="Grishin N.V."/>
            <person name="Zhao Y."/>
        </authorList>
    </citation>
    <scope>ACETYLATION [LARGE SCALE ANALYSIS] AT LYS-70</scope>
    <scope>IDENTIFICATION BY MASS SPECTROMETRY</scope>
    <source>
        <strain>K12 / JW1106</strain>
        <strain>K12 / MG1655 / ATCC 47076</strain>
    </source>
</reference>
<reference key="11">
    <citation type="journal article" date="1975" name="Proc. Natl. Acad. Sci. U.S.A.">
        <title>Three-dimensional structure of Escherichia coli thioredoxin-S2 to 2.8-A resolution.</title>
        <authorList>
            <person name="Holmgren A."/>
            <person name="Soederberg B.-O."/>
            <person name="Eklund H."/>
            <person name="Braenden C.-I."/>
        </authorList>
    </citation>
    <scope>X-RAY CRYSTALLOGRAPHY (2.8 ANGSTROMS)</scope>
</reference>
<reference key="12">
    <citation type="journal article" date="1974" name="J. Mol. Biol.">
        <title>Structure of oxidized thioredoxin to 4 with 5-A resolution.</title>
        <authorList>
            <person name="Soederberg B.-O."/>
            <person name="Holmgren A."/>
            <person name="Braenden C.-I."/>
        </authorList>
    </citation>
    <scope>X-RAY CRYSTALLOGRAPHY (4.5 ANGSTROMS)</scope>
</reference>
<reference key="13">
    <citation type="journal article" date="1990" name="J. Mol. Biol.">
        <title>Crystal structure of thioredoxin from Escherichia coli at 1.68-A resolution.</title>
        <authorList>
            <person name="Katti S.K."/>
            <person name="le Master D.M."/>
            <person name="Eklund H."/>
        </authorList>
    </citation>
    <scope>X-RAY CRYSTALLOGRAPHY (1.68 ANGSTROMS)</scope>
</reference>
<reference key="14">
    <citation type="journal article" date="1993" name="Biochemistry">
        <title>Crystal structure analysis of a mutant Escherichia coli thioredoxin in which lysine 36 is replaced by glutamic acid.</title>
        <authorList>
            <person name="Nikkola M."/>
            <person name="Gleason F.K."/>
            <person name="Fuchs J.A."/>
            <person name="Eklund H."/>
        </authorList>
    </citation>
    <scope>X-RAY CRYSTALLOGRAPHY (2.0 ANGSTROMS) OF MUTANT GLU-37</scope>
</reference>
<reference key="15">
    <citation type="journal article" date="1999" name="Acta Crystallogr. D">
        <title>The CXXC motif: crystal structure of an active-site variant of Escherichia coli thioredoxin.</title>
        <authorList>
            <person name="Schultz L.W."/>
            <person name="Chivers P.T."/>
            <person name="Raines R.T."/>
        </authorList>
    </citation>
    <scope>X-RAY CRYSTALLOGRAPHY (2.2 ANGSTROMS)</scope>
    <scope>DISULFIDE BOND</scope>
</reference>
<reference key="16">
    <citation type="journal article" date="2000" name="Science">
        <title>Twists in catalysis: alternating conformations of Escherichia coli thioredoxin reductase.</title>
        <authorList>
            <person name="Lennon B.W."/>
            <person name="Williams C.H. Jr."/>
            <person name="Ludwig M.L."/>
        </authorList>
    </citation>
    <scope>X-RAY CRYSTALLOGRAPHY (2.95 ANGSTROMS) IN COMPLEX WITH TRXB</scope>
</reference>
<reference key="17">
    <citation type="journal article" date="1990" name="Biochemistry">
        <title>Three-dimensional solution structure of the reduced form of Escherichia coli thioredoxin determined by nuclear magnetic resonance spectroscopy.</title>
        <authorList>
            <person name="Dyson H.J."/>
            <person name="Gippert G.P."/>
            <person name="Case D.A."/>
            <person name="Holmgren A."/>
            <person name="Wright P.E."/>
        </authorList>
    </citation>
    <scope>STRUCTURE BY NMR</scope>
</reference>
<reference key="18">
    <citation type="journal article" date="1994" name="Structure">
        <title>High-resolution solution structures of oxidized and reduced Escherichia coli thioredoxin.</title>
        <authorList>
            <person name="Jeng M.F."/>
            <person name="Campbell A.P."/>
            <person name="Begley T."/>
            <person name="Holmgren A."/>
            <person name="Case D.A."/>
            <person name="Wright P.E."/>
            <person name="Dyson H.J."/>
        </authorList>
    </citation>
    <scope>STRUCTURE BY NMR</scope>
</reference>
<name>THIO_ECOLI</name>
<organism>
    <name type="scientific">Escherichia coli (strain K12)</name>
    <dbReference type="NCBI Taxonomy" id="83333"/>
    <lineage>
        <taxon>Bacteria</taxon>
        <taxon>Pseudomonadati</taxon>
        <taxon>Pseudomonadota</taxon>
        <taxon>Gammaproteobacteria</taxon>
        <taxon>Enterobacterales</taxon>
        <taxon>Enterobacteriaceae</taxon>
        <taxon>Escherichia</taxon>
    </lineage>
</organism>
<dbReference type="EMBL" id="M26133">
    <property type="protein sequence ID" value="AAA24693.1"/>
    <property type="molecule type" value="Genomic_DNA"/>
</dbReference>
<dbReference type="EMBL" id="K02845">
    <property type="protein sequence ID" value="AAA24534.1"/>
    <property type="status" value="ALT_INIT"/>
    <property type="molecule type" value="Genomic_DNA"/>
</dbReference>
<dbReference type="EMBL" id="M10424">
    <property type="protein sequence ID" value="AAA24533.1"/>
    <property type="molecule type" value="Genomic_DNA"/>
</dbReference>
<dbReference type="EMBL" id="M54881">
    <property type="protein sequence ID" value="AAA24696.1"/>
    <property type="molecule type" value="Genomic_DNA"/>
</dbReference>
<dbReference type="EMBL" id="M12779">
    <property type="protein sequence ID" value="AAA24694.1"/>
    <property type="molecule type" value="Genomic_DNA"/>
</dbReference>
<dbReference type="EMBL" id="M87049">
    <property type="protein sequence ID" value="AAA67582.1"/>
    <property type="status" value="ALT_INIT"/>
    <property type="molecule type" value="Genomic_DNA"/>
</dbReference>
<dbReference type="EMBL" id="U00096">
    <property type="protein sequence ID" value="AAC76786.2"/>
    <property type="molecule type" value="Genomic_DNA"/>
</dbReference>
<dbReference type="EMBL" id="AP009048">
    <property type="protein sequence ID" value="BAE77517.1"/>
    <property type="molecule type" value="Genomic_DNA"/>
</dbReference>
<dbReference type="PIR" id="A91519">
    <property type="entry name" value="TXEC"/>
</dbReference>
<dbReference type="RefSeq" id="NP_418228.2">
    <property type="nucleotide sequence ID" value="NC_000913.3"/>
</dbReference>
<dbReference type="RefSeq" id="WP_001280776.1">
    <property type="nucleotide sequence ID" value="NZ_STEB01000021.1"/>
</dbReference>
<dbReference type="PDB" id="1F6M">
    <property type="method" value="X-ray"/>
    <property type="resolution" value="2.95 A"/>
    <property type="chains" value="C/D/G/H=2-109"/>
</dbReference>
<dbReference type="PDB" id="1KEB">
    <property type="method" value="X-ray"/>
    <property type="resolution" value="1.80 A"/>
    <property type="chains" value="A/B=2-109"/>
</dbReference>
<dbReference type="PDB" id="1M7T">
    <property type="method" value="NMR"/>
    <property type="chains" value="A=32-108"/>
</dbReference>
<dbReference type="PDB" id="1OAZ">
    <property type="method" value="X-ray"/>
    <property type="resolution" value="2.78 A"/>
    <property type="chains" value="A/B=2-109"/>
</dbReference>
<dbReference type="PDB" id="1SKR">
    <property type="method" value="X-ray"/>
    <property type="resolution" value="2.40 A"/>
    <property type="chains" value="B=2-109"/>
</dbReference>
<dbReference type="PDB" id="1SKS">
    <property type="method" value="X-ray"/>
    <property type="resolution" value="2.30 A"/>
    <property type="chains" value="B=2-109"/>
</dbReference>
<dbReference type="PDB" id="1SKW">
    <property type="method" value="X-ray"/>
    <property type="resolution" value="2.30 A"/>
    <property type="chains" value="B=2-109"/>
</dbReference>
<dbReference type="PDB" id="1SL0">
    <property type="method" value="X-ray"/>
    <property type="resolution" value="3.20 A"/>
    <property type="chains" value="B/D=2-109"/>
</dbReference>
<dbReference type="PDB" id="1SL1">
    <property type="method" value="X-ray"/>
    <property type="resolution" value="2.20 A"/>
    <property type="chains" value="B=2-109"/>
</dbReference>
<dbReference type="PDB" id="1SL2">
    <property type="method" value="X-ray"/>
    <property type="resolution" value="2.30 A"/>
    <property type="chains" value="B=2-109"/>
</dbReference>
<dbReference type="PDB" id="1SRX">
    <property type="method" value="X-ray"/>
    <property type="resolution" value="2.80 A"/>
    <property type="chains" value="A=2-109"/>
</dbReference>
<dbReference type="PDB" id="1T7P">
    <property type="method" value="X-ray"/>
    <property type="resolution" value="2.20 A"/>
    <property type="chains" value="B=2-109"/>
</dbReference>
<dbReference type="PDB" id="1T8E">
    <property type="method" value="X-ray"/>
    <property type="resolution" value="2.54 A"/>
    <property type="chains" value="B=2-109"/>
</dbReference>
<dbReference type="PDB" id="1THO">
    <property type="method" value="X-ray"/>
    <property type="resolution" value="2.30 A"/>
    <property type="chains" value="A=2-109"/>
</dbReference>
<dbReference type="PDB" id="1TK0">
    <property type="method" value="X-ray"/>
    <property type="resolution" value="2.30 A"/>
    <property type="chains" value="B=2-109"/>
</dbReference>
<dbReference type="PDB" id="1TK5">
    <property type="method" value="X-ray"/>
    <property type="resolution" value="2.20 A"/>
    <property type="chains" value="B=2-109"/>
</dbReference>
<dbReference type="PDB" id="1TK8">
    <property type="method" value="X-ray"/>
    <property type="resolution" value="2.50 A"/>
    <property type="chains" value="B=2-109"/>
</dbReference>
<dbReference type="PDB" id="1TKD">
    <property type="method" value="X-ray"/>
    <property type="resolution" value="2.49 A"/>
    <property type="chains" value="B=2-109"/>
</dbReference>
<dbReference type="PDB" id="1TXX">
    <property type="method" value="X-ray"/>
    <property type="resolution" value="2.20 A"/>
    <property type="chains" value="A=2-109"/>
</dbReference>
<dbReference type="PDB" id="1X9M">
    <property type="method" value="X-ray"/>
    <property type="resolution" value="2.10 A"/>
    <property type="chains" value="B=2-109"/>
</dbReference>
<dbReference type="PDB" id="1X9S">
    <property type="method" value="X-ray"/>
    <property type="resolution" value="2.70 A"/>
    <property type="chains" value="B=2-109"/>
</dbReference>
<dbReference type="PDB" id="1X9W">
    <property type="method" value="X-ray"/>
    <property type="resolution" value="2.30 A"/>
    <property type="chains" value="B=2-109"/>
</dbReference>
<dbReference type="PDB" id="1XOA">
    <property type="method" value="NMR"/>
    <property type="chains" value="A=2-109"/>
</dbReference>
<dbReference type="PDB" id="1XOB">
    <property type="method" value="NMR"/>
    <property type="chains" value="A=2-109"/>
</dbReference>
<dbReference type="PDB" id="1ZCP">
    <property type="method" value="X-ray"/>
    <property type="resolution" value="2.30 A"/>
    <property type="chains" value="A/B/C/D=2-109"/>
</dbReference>
<dbReference type="PDB" id="1ZYQ">
    <property type="method" value="X-ray"/>
    <property type="resolution" value="2.70 A"/>
    <property type="chains" value="B=2-109"/>
</dbReference>
<dbReference type="PDB" id="1ZZY">
    <property type="method" value="X-ray"/>
    <property type="resolution" value="2.50 A"/>
    <property type="chains" value="A/B=2-109"/>
</dbReference>
<dbReference type="PDB" id="2AJQ">
    <property type="method" value="X-ray"/>
    <property type="resolution" value="2.60 A"/>
    <property type="chains" value="B/I=2-109"/>
</dbReference>
<dbReference type="PDB" id="2BTO">
    <property type="method" value="X-ray"/>
    <property type="resolution" value="2.50 A"/>
    <property type="chains" value="T=2-109"/>
</dbReference>
<dbReference type="PDB" id="2EIO">
    <property type="method" value="X-ray"/>
    <property type="resolution" value="2.60 A"/>
    <property type="chains" value="A/B/C/D=2-109"/>
</dbReference>
<dbReference type="PDB" id="2EIQ">
    <property type="method" value="X-ray"/>
    <property type="resolution" value="1.90 A"/>
    <property type="chains" value="A/B=2-109"/>
</dbReference>
<dbReference type="PDB" id="2EIR">
    <property type="method" value="X-ray"/>
    <property type="resolution" value="2.50 A"/>
    <property type="chains" value="A/B/C/D=2-109"/>
</dbReference>
<dbReference type="PDB" id="2FCH">
    <property type="method" value="X-ray"/>
    <property type="resolution" value="2.60 A"/>
    <property type="chains" value="A/B/C/D/E/F/G=2-109"/>
</dbReference>
<dbReference type="PDB" id="2FD3">
    <property type="method" value="X-ray"/>
    <property type="resolution" value="2.45 A"/>
    <property type="chains" value="A/B=2-109"/>
</dbReference>
<dbReference type="PDB" id="2H6X">
    <property type="method" value="X-ray"/>
    <property type="resolution" value="2.60 A"/>
    <property type="chains" value="A/B=2-109"/>
</dbReference>
<dbReference type="PDB" id="2H6Y">
    <property type="method" value="X-ray"/>
    <property type="resolution" value="2.40 A"/>
    <property type="chains" value="A/B=2-109"/>
</dbReference>
<dbReference type="PDB" id="2H6Z">
    <property type="method" value="X-ray"/>
    <property type="resolution" value="2.25 A"/>
    <property type="chains" value="A/B=2-109"/>
</dbReference>
<dbReference type="PDB" id="2H70">
    <property type="method" value="X-ray"/>
    <property type="resolution" value="2.70 A"/>
    <property type="chains" value="A/B=2-109"/>
</dbReference>
<dbReference type="PDB" id="2H71">
    <property type="method" value="X-ray"/>
    <property type="resolution" value="2.20 A"/>
    <property type="chains" value="A/B=2-109"/>
</dbReference>
<dbReference type="PDB" id="2H72">
    <property type="method" value="X-ray"/>
    <property type="resolution" value="2.25 A"/>
    <property type="chains" value="A/B=2-109"/>
</dbReference>
<dbReference type="PDB" id="2H73">
    <property type="method" value="X-ray"/>
    <property type="resolution" value="2.45 A"/>
    <property type="chains" value="A/B=2-109"/>
</dbReference>
<dbReference type="PDB" id="2H74">
    <property type="method" value="X-ray"/>
    <property type="resolution" value="2.40 A"/>
    <property type="chains" value="A/B=4-109"/>
</dbReference>
<dbReference type="PDB" id="2H75">
    <property type="method" value="X-ray"/>
    <property type="resolution" value="2.20 A"/>
    <property type="chains" value="A/B=2-109"/>
</dbReference>
<dbReference type="PDB" id="2H76">
    <property type="method" value="X-ray"/>
    <property type="resolution" value="2.25 A"/>
    <property type="chains" value="A/B=2-109"/>
</dbReference>
<dbReference type="PDB" id="2O8V">
    <property type="method" value="X-ray"/>
    <property type="resolution" value="3.00 A"/>
    <property type="chains" value="B=2-109"/>
</dbReference>
<dbReference type="PDB" id="2TIR">
    <property type="method" value="X-ray"/>
    <property type="resolution" value="2.00 A"/>
    <property type="chains" value="A=2-109"/>
</dbReference>
<dbReference type="PDB" id="2TRX">
    <property type="method" value="X-ray"/>
    <property type="resolution" value="1.68 A"/>
    <property type="chains" value="A/B=2-109"/>
</dbReference>
<dbReference type="PDB" id="3DYR">
    <property type="method" value="X-ray"/>
    <property type="resolution" value="2.00 A"/>
    <property type="chains" value="A/B=2-109"/>
</dbReference>
<dbReference type="PDB" id="4HU7">
    <property type="method" value="X-ray"/>
    <property type="resolution" value="1.40 A"/>
    <property type="chains" value="A/B=2-109"/>
</dbReference>
<dbReference type="PDB" id="4HU9">
    <property type="method" value="X-ray"/>
    <property type="resolution" value="1.55 A"/>
    <property type="chains" value="A=2-109"/>
</dbReference>
<dbReference type="PDB" id="4HUA">
    <property type="method" value="X-ray"/>
    <property type="resolution" value="1.10 A"/>
    <property type="chains" value="A=2-109"/>
</dbReference>
<dbReference type="PDB" id="4X43">
    <property type="method" value="X-ray"/>
    <property type="resolution" value="1.65 A"/>
    <property type="chains" value="A/B/C=2-109"/>
</dbReference>
<dbReference type="PDB" id="5HR0">
    <property type="method" value="X-ray"/>
    <property type="resolution" value="1.31 A"/>
    <property type="chains" value="A/B=1-109"/>
</dbReference>
<dbReference type="PDB" id="5HR1">
    <property type="method" value="X-ray"/>
    <property type="resolution" value="2.14 A"/>
    <property type="chains" value="A/B/C/D/E/F/G=1-107"/>
</dbReference>
<dbReference type="PDB" id="5HR2">
    <property type="method" value="X-ray"/>
    <property type="resolution" value="1.20 A"/>
    <property type="chains" value="A=1-109"/>
</dbReference>
<dbReference type="PDB" id="5HR3">
    <property type="method" value="X-ray"/>
    <property type="resolution" value="1.10 A"/>
    <property type="chains" value="A/B=1-109"/>
</dbReference>
<dbReference type="PDB" id="5XOC">
    <property type="method" value="X-ray"/>
    <property type="resolution" value="2.40 A"/>
    <property type="chains" value="B=2-109"/>
</dbReference>
<dbReference type="PDB" id="6GD1">
    <property type="method" value="X-ray"/>
    <property type="resolution" value="2.01 A"/>
    <property type="chains" value="A/B=1-109"/>
</dbReference>
<dbReference type="PDB" id="6GDG">
    <property type="method" value="EM"/>
    <property type="resolution" value="4.11 A"/>
    <property type="chains" value="A=2-109"/>
</dbReference>
<dbReference type="PDB" id="6H7J">
    <property type="method" value="X-ray"/>
    <property type="resolution" value="2.80 A"/>
    <property type="chains" value="E/F=2-109"/>
</dbReference>
<dbReference type="PDB" id="6H7L">
    <property type="method" value="X-ray"/>
    <property type="resolution" value="2.70 A"/>
    <property type="chains" value="E/F=2-109"/>
</dbReference>
<dbReference type="PDB" id="6H7M">
    <property type="method" value="X-ray"/>
    <property type="resolution" value="2.76 A"/>
    <property type="chains" value="E/F=2-109"/>
</dbReference>
<dbReference type="PDB" id="6H7N">
    <property type="method" value="X-ray"/>
    <property type="resolution" value="2.50 A"/>
    <property type="chains" value="E/F=2-109"/>
</dbReference>
<dbReference type="PDB" id="6H7O">
    <property type="method" value="X-ray"/>
    <property type="resolution" value="2.80 A"/>
    <property type="chains" value="E/F=2-109"/>
</dbReference>
<dbReference type="PDB" id="6IBL">
    <property type="method" value="X-ray"/>
    <property type="resolution" value="2.70 A"/>
    <property type="chains" value="A/B=2-109"/>
</dbReference>
<dbReference type="PDB" id="6LUR">
    <property type="method" value="X-ray"/>
    <property type="resolution" value="2.00 A"/>
    <property type="chains" value="A/B/C/D/E/F/G/H=1-109"/>
</dbReference>
<dbReference type="PDB" id="6N7W">
    <property type="method" value="EM"/>
    <property type="resolution" value="4.50 A"/>
    <property type="chains" value="I=1-109"/>
</dbReference>
<dbReference type="PDB" id="6P7E">
    <property type="method" value="X-ray"/>
    <property type="resolution" value="3.00 A"/>
    <property type="chains" value="E/F/G/H=1-109"/>
</dbReference>
<dbReference type="PDB" id="6Y4Y">
    <property type="method" value="X-ray"/>
    <property type="resolution" value="1.75 A"/>
    <property type="chains" value="A/B/C/D=1-109"/>
</dbReference>
<dbReference type="PDB" id="6Y4Z">
    <property type="method" value="X-ray"/>
    <property type="resolution" value="1.90 A"/>
    <property type="chains" value="A/B/C/D=1-109"/>
</dbReference>
<dbReference type="PDB" id="6YEV">
    <property type="method" value="X-ray"/>
    <property type="resolution" value="2.94 A"/>
    <property type="chains" value="E/F/G=1-109"/>
</dbReference>
<dbReference type="PDB" id="7SCD">
    <property type="method" value="X-ray"/>
    <property type="resolution" value="2.90 A"/>
    <property type="chains" value="A=1-108"/>
</dbReference>
<dbReference type="PDB" id="7SCE">
    <property type="method" value="X-ray"/>
    <property type="resolution" value="2.75 A"/>
    <property type="chains" value="A=1-108"/>
</dbReference>
<dbReference type="PDB" id="8KGZ">
    <property type="method" value="X-ray"/>
    <property type="resolution" value="2.21 A"/>
    <property type="chains" value="A/B=1-109"/>
</dbReference>
<dbReference type="PDB" id="8S2N">
    <property type="method" value="X-ray"/>
    <property type="resolution" value="2.11 A"/>
    <property type="chains" value="C=2-109"/>
</dbReference>
<dbReference type="PDBsum" id="1F6M"/>
<dbReference type="PDBsum" id="1KEB"/>
<dbReference type="PDBsum" id="1M7T"/>
<dbReference type="PDBsum" id="1OAZ"/>
<dbReference type="PDBsum" id="1SKR"/>
<dbReference type="PDBsum" id="1SKS"/>
<dbReference type="PDBsum" id="1SKW"/>
<dbReference type="PDBsum" id="1SL0"/>
<dbReference type="PDBsum" id="1SL1"/>
<dbReference type="PDBsum" id="1SL2"/>
<dbReference type="PDBsum" id="1SRX"/>
<dbReference type="PDBsum" id="1T7P"/>
<dbReference type="PDBsum" id="1T8E"/>
<dbReference type="PDBsum" id="1THO"/>
<dbReference type="PDBsum" id="1TK0"/>
<dbReference type="PDBsum" id="1TK5"/>
<dbReference type="PDBsum" id="1TK8"/>
<dbReference type="PDBsum" id="1TKD"/>
<dbReference type="PDBsum" id="1TXX"/>
<dbReference type="PDBsum" id="1X9M"/>
<dbReference type="PDBsum" id="1X9S"/>
<dbReference type="PDBsum" id="1X9W"/>
<dbReference type="PDBsum" id="1XOA"/>
<dbReference type="PDBsum" id="1XOB"/>
<dbReference type="PDBsum" id="1ZCP"/>
<dbReference type="PDBsum" id="1ZYQ"/>
<dbReference type="PDBsum" id="1ZZY"/>
<dbReference type="PDBsum" id="2AJQ"/>
<dbReference type="PDBsum" id="2BTO"/>
<dbReference type="PDBsum" id="2EIO"/>
<dbReference type="PDBsum" id="2EIQ"/>
<dbReference type="PDBsum" id="2EIR"/>
<dbReference type="PDBsum" id="2FCH"/>
<dbReference type="PDBsum" id="2FD3"/>
<dbReference type="PDBsum" id="2H6X"/>
<dbReference type="PDBsum" id="2H6Y"/>
<dbReference type="PDBsum" id="2H6Z"/>
<dbReference type="PDBsum" id="2H70"/>
<dbReference type="PDBsum" id="2H71"/>
<dbReference type="PDBsum" id="2H72"/>
<dbReference type="PDBsum" id="2H73"/>
<dbReference type="PDBsum" id="2H74"/>
<dbReference type="PDBsum" id="2H75"/>
<dbReference type="PDBsum" id="2H76"/>
<dbReference type="PDBsum" id="2O8V"/>
<dbReference type="PDBsum" id="2TIR"/>
<dbReference type="PDBsum" id="2TRX"/>
<dbReference type="PDBsum" id="3DYR"/>
<dbReference type="PDBsum" id="4HU7"/>
<dbReference type="PDBsum" id="4HU9"/>
<dbReference type="PDBsum" id="4HUA"/>
<dbReference type="PDBsum" id="4X43"/>
<dbReference type="PDBsum" id="5HR0"/>
<dbReference type="PDBsum" id="5HR1"/>
<dbReference type="PDBsum" id="5HR2"/>
<dbReference type="PDBsum" id="5HR3"/>
<dbReference type="PDBsum" id="5XOC"/>
<dbReference type="PDBsum" id="6GD1"/>
<dbReference type="PDBsum" id="6GDG"/>
<dbReference type="PDBsum" id="6H7J"/>
<dbReference type="PDBsum" id="6H7L"/>
<dbReference type="PDBsum" id="6H7M"/>
<dbReference type="PDBsum" id="6H7N"/>
<dbReference type="PDBsum" id="6H7O"/>
<dbReference type="PDBsum" id="6IBL"/>
<dbReference type="PDBsum" id="6LUR"/>
<dbReference type="PDBsum" id="6N7W"/>
<dbReference type="PDBsum" id="6P7E"/>
<dbReference type="PDBsum" id="6Y4Y"/>
<dbReference type="PDBsum" id="6Y4Z"/>
<dbReference type="PDBsum" id="6YEV"/>
<dbReference type="PDBsum" id="7SCD"/>
<dbReference type="PDBsum" id="7SCE"/>
<dbReference type="PDBsum" id="8KGZ"/>
<dbReference type="PDBsum" id="8S2N"/>
<dbReference type="BMRB" id="P0AA25"/>
<dbReference type="SASBDB" id="P0AA25"/>
<dbReference type="SMR" id="P0AA25"/>
<dbReference type="BioGRID" id="4263316">
    <property type="interactions" value="306"/>
</dbReference>
<dbReference type="BioGRID" id="852588">
    <property type="interactions" value="9"/>
</dbReference>
<dbReference type="DIP" id="DIP-31856N"/>
<dbReference type="FunCoup" id="P0AA25">
    <property type="interactions" value="803"/>
</dbReference>
<dbReference type="IntAct" id="P0AA25">
    <property type="interactions" value="99"/>
</dbReference>
<dbReference type="MINT" id="P0AA25"/>
<dbReference type="STRING" id="511145.b3781"/>
<dbReference type="CarbonylDB" id="P0AA25"/>
<dbReference type="iPTMnet" id="P0AA25"/>
<dbReference type="jPOST" id="P0AA25"/>
<dbReference type="PaxDb" id="511145-b3781"/>
<dbReference type="EnsemblBacteria" id="AAC76786">
    <property type="protein sequence ID" value="AAC76786"/>
    <property type="gene ID" value="b3781"/>
</dbReference>
<dbReference type="GeneID" id="93778163"/>
<dbReference type="GeneID" id="948289"/>
<dbReference type="KEGG" id="ecj:JW5856"/>
<dbReference type="KEGG" id="eco:b3781"/>
<dbReference type="KEGG" id="ecoc:C3026_20470"/>
<dbReference type="PATRIC" id="fig|511145.12.peg.3896"/>
<dbReference type="EchoBASE" id="EB1024"/>
<dbReference type="eggNOG" id="COG3118">
    <property type="taxonomic scope" value="Bacteria"/>
</dbReference>
<dbReference type="HOGENOM" id="CLU_090389_10_2_6"/>
<dbReference type="InParanoid" id="P0AA25"/>
<dbReference type="OMA" id="HIHYVTD"/>
<dbReference type="OrthoDB" id="9790390at2"/>
<dbReference type="PhylomeDB" id="P0AA25"/>
<dbReference type="BioCyc" id="EcoCyc:RED-THIOREDOXIN-MONOMER"/>
<dbReference type="BioCyc" id="MetaCyc:RED-THIOREDOXIN-MONOMER"/>
<dbReference type="EvolutionaryTrace" id="P0AA25"/>
<dbReference type="PRO" id="PR:P0AA25"/>
<dbReference type="Proteomes" id="UP000000625">
    <property type="component" value="Chromosome"/>
</dbReference>
<dbReference type="GO" id="GO:0005737">
    <property type="term" value="C:cytoplasm"/>
    <property type="evidence" value="ECO:0000318"/>
    <property type="project" value="GO_Central"/>
</dbReference>
<dbReference type="GO" id="GO:0005829">
    <property type="term" value="C:cytosol"/>
    <property type="evidence" value="ECO:0000314"/>
    <property type="project" value="EcoCyc"/>
</dbReference>
<dbReference type="GO" id="GO:0030337">
    <property type="term" value="F:DNA polymerase processivity factor activity"/>
    <property type="evidence" value="ECO:0000314"/>
    <property type="project" value="FlyBase"/>
</dbReference>
<dbReference type="GO" id="GO:0015035">
    <property type="term" value="F:protein-disulfide reductase activity"/>
    <property type="evidence" value="ECO:0000314"/>
    <property type="project" value="EcoCyc"/>
</dbReference>
<dbReference type="GO" id="GO:0045454">
    <property type="term" value="P:cell redox homeostasis"/>
    <property type="evidence" value="ECO:0000315"/>
    <property type="project" value="EcoCyc"/>
</dbReference>
<dbReference type="CDD" id="cd02947">
    <property type="entry name" value="TRX_family"/>
    <property type="match status" value="1"/>
</dbReference>
<dbReference type="FunFam" id="3.40.30.10:FF:000001">
    <property type="entry name" value="Thioredoxin"/>
    <property type="match status" value="1"/>
</dbReference>
<dbReference type="Gene3D" id="3.40.30.10">
    <property type="entry name" value="Glutaredoxin"/>
    <property type="match status" value="1"/>
</dbReference>
<dbReference type="InterPro" id="IPR005746">
    <property type="entry name" value="Thioredoxin"/>
</dbReference>
<dbReference type="InterPro" id="IPR036249">
    <property type="entry name" value="Thioredoxin-like_sf"/>
</dbReference>
<dbReference type="InterPro" id="IPR017937">
    <property type="entry name" value="Thioredoxin_CS"/>
</dbReference>
<dbReference type="InterPro" id="IPR013766">
    <property type="entry name" value="Thioredoxin_domain"/>
</dbReference>
<dbReference type="NCBIfam" id="NF006898">
    <property type="entry name" value="PRK09381.1"/>
    <property type="match status" value="1"/>
</dbReference>
<dbReference type="NCBIfam" id="TIGR01068">
    <property type="entry name" value="thioredoxin"/>
    <property type="match status" value="1"/>
</dbReference>
<dbReference type="PANTHER" id="PTHR45663">
    <property type="entry name" value="GEO12009P1"/>
    <property type="match status" value="1"/>
</dbReference>
<dbReference type="PANTHER" id="PTHR45663:SF11">
    <property type="entry name" value="GEO12009P1"/>
    <property type="match status" value="1"/>
</dbReference>
<dbReference type="Pfam" id="PF00085">
    <property type="entry name" value="Thioredoxin"/>
    <property type="match status" value="1"/>
</dbReference>
<dbReference type="PIRSF" id="PIRSF000077">
    <property type="entry name" value="Thioredoxin"/>
    <property type="match status" value="1"/>
</dbReference>
<dbReference type="PRINTS" id="PR00421">
    <property type="entry name" value="THIOREDOXIN"/>
</dbReference>
<dbReference type="SUPFAM" id="SSF52833">
    <property type="entry name" value="Thioredoxin-like"/>
    <property type="match status" value="1"/>
</dbReference>
<dbReference type="PROSITE" id="PS00194">
    <property type="entry name" value="THIOREDOXIN_1"/>
    <property type="match status" value="1"/>
</dbReference>
<dbReference type="PROSITE" id="PS51352">
    <property type="entry name" value="THIOREDOXIN_2"/>
    <property type="match status" value="1"/>
</dbReference>
<sequence>MSDKIIHLTDDSFDTDVLKADGAILVDFWAEWCGPCKMIAPILDEIADEYQGKLTVAKLNIDQNPGTAPKYGIRGIPTLLLFKNGEVAATKVGALSKGQLKEFLDANLA</sequence>
<accession>P0AA25</accession>
<accession>P00274</accession>
<accession>P76750</accession>
<accession>Q2M889</accession>
<accession>Q47674</accession>
<accession>Q8XAT2</accession>
<keyword id="KW-0002">3D-structure</keyword>
<keyword id="KW-0007">Acetylation</keyword>
<keyword id="KW-0903">Direct protein sequencing</keyword>
<keyword id="KW-1015">Disulfide bond</keyword>
<keyword id="KW-0249">Electron transport</keyword>
<keyword id="KW-0945">Host-virus interaction</keyword>
<keyword id="KW-0676">Redox-active center</keyword>
<keyword id="KW-1185">Reference proteome</keyword>
<keyword id="KW-0813">Transport</keyword>
<feature type="initiator methionine" description="Removed" evidence="5">
    <location>
        <position position="1"/>
    </location>
</feature>
<feature type="chain" id="PRO_0000120096" description="Thioredoxin 1">
    <location>
        <begin position="2"/>
        <end position="109"/>
    </location>
</feature>
<feature type="domain" description="Thioredoxin" evidence="1">
    <location>
        <begin position="2"/>
        <end position="109"/>
    </location>
</feature>
<feature type="active site" description="Nucleophile">
    <location>
        <position position="33"/>
    </location>
</feature>
<feature type="active site" description="Nucleophile">
    <location>
        <position position="36"/>
    </location>
</feature>
<feature type="site" description="Deprotonates C-terminal active site Cys">
    <location>
        <position position="27"/>
    </location>
</feature>
<feature type="site" description="Contributes to redox potential value">
    <location>
        <position position="34"/>
    </location>
</feature>
<feature type="site" description="Contributes to redox potential value">
    <location>
        <position position="35"/>
    </location>
</feature>
<feature type="modified residue" description="N6-acetyllysine" evidence="4">
    <location>
        <position position="70"/>
    </location>
</feature>
<feature type="disulfide bond" description="Redox-active" evidence="1 2">
    <location>
        <begin position="33"/>
        <end position="36"/>
    </location>
</feature>
<feature type="sequence conflict" description="In Ref. 8; AA sequence." evidence="6" ref="8">
    <original>GI</original>
    <variation>IG</variation>
    <location>
        <begin position="72"/>
        <end position="73"/>
    </location>
</feature>
<feature type="sequence conflict" description="In Ref. 5; AAA24696." evidence="6" ref="5">
    <original>A</original>
    <variation>AS</variation>
    <location>
        <position position="88"/>
    </location>
</feature>
<feature type="strand" evidence="7">
    <location>
        <begin position="5"/>
        <end position="8"/>
    </location>
</feature>
<feature type="turn" evidence="7">
    <location>
        <begin position="10"/>
        <end position="12"/>
    </location>
</feature>
<feature type="helix" evidence="7">
    <location>
        <begin position="13"/>
        <end position="16"/>
    </location>
</feature>
<feature type="turn" evidence="7">
    <location>
        <begin position="17"/>
        <end position="19"/>
    </location>
</feature>
<feature type="strand" evidence="7">
    <location>
        <begin position="22"/>
        <end position="29"/>
    </location>
</feature>
<feature type="helix" evidence="7">
    <location>
        <begin position="34"/>
        <end position="49"/>
    </location>
</feature>
<feature type="turn" evidence="7">
    <location>
        <begin position="50"/>
        <end position="53"/>
    </location>
</feature>
<feature type="strand" evidence="7">
    <location>
        <begin position="55"/>
        <end position="60"/>
    </location>
</feature>
<feature type="turn" evidence="7">
    <location>
        <begin position="61"/>
        <end position="63"/>
    </location>
</feature>
<feature type="helix" evidence="7">
    <location>
        <begin position="65"/>
        <end position="70"/>
    </location>
</feature>
<feature type="strand" evidence="7">
    <location>
        <begin position="75"/>
        <end position="83"/>
    </location>
</feature>
<feature type="strand" evidence="7">
    <location>
        <begin position="86"/>
        <end position="93"/>
    </location>
</feature>
<feature type="helix" evidence="7">
    <location>
        <begin position="97"/>
        <end position="105"/>
    </location>
</feature>